<protein>
    <recommendedName>
        <fullName>UDP-glucose 4-epimerase</fullName>
        <ecNumber>5.1.3.2</ecNumber>
    </recommendedName>
    <alternativeName>
        <fullName>Galactowaldenase</fullName>
    </alternativeName>
    <alternativeName>
        <fullName>UDP-galactose 4-epimerase</fullName>
    </alternativeName>
</protein>
<reference key="1">
    <citation type="journal article" date="2001" name="Science">
        <title>Mechanisms of evolution in Rickettsia conorii and R. prowazekii.</title>
        <authorList>
            <person name="Ogata H."/>
            <person name="Audic S."/>
            <person name="Renesto-Audiffren P."/>
            <person name="Fournier P.-E."/>
            <person name="Barbe V."/>
            <person name="Samson D."/>
            <person name="Roux V."/>
            <person name="Cossart P."/>
            <person name="Weissenbach J."/>
            <person name="Claverie J.-M."/>
            <person name="Raoult D."/>
        </authorList>
    </citation>
    <scope>NUCLEOTIDE SEQUENCE [LARGE SCALE GENOMIC DNA]</scope>
    <source>
        <strain>ATCC VR-613 / Malish 7</strain>
    </source>
</reference>
<comment type="function">
    <text evidence="1">Epimerizes UDP-galactose to UDP-glucose.</text>
</comment>
<comment type="catalytic activity">
    <reaction>
        <text>UDP-alpha-D-glucose = UDP-alpha-D-galactose</text>
        <dbReference type="Rhea" id="RHEA:22168"/>
        <dbReference type="ChEBI" id="CHEBI:58885"/>
        <dbReference type="ChEBI" id="CHEBI:66914"/>
        <dbReference type="EC" id="5.1.3.2"/>
    </reaction>
</comment>
<comment type="similarity">
    <text evidence="2">Belongs to the polysaccharide synthase family.</text>
</comment>
<proteinExistence type="inferred from homology"/>
<accession>Q92IG3</accession>
<name>CAPD_RICCN</name>
<sequence length="341" mass="38411">MFVDKTLMITGGTGSFGNAVLSRFLKSGIINDIKEIRIFSRDEKKQEDMRIALNNPKLKFYIGDVRNYKSIDEAMHGVDYVFHAAALKQVPTCEFYPMEAINTNVLGAENVLSAAINNKVTKVIVLSTDKAVYPINAMGLSKALMEKLAIAKARMRSPGETVLCVTRYGNVMASRGSVIPLFINQIKQGKVLTITEPSMTRFLMSLVDSVDLVLYAFEHGHQGDIFVQKSPASTIEVLAKALQDIFDSKNEIRFIGTRHGEKHYESLVSSEEMAKADDLRDYYRIPMDGRDLNYAKYFVEGEKKVALLEDYTSHNTKRLNLEEVKELLLTLDYVQEELKNA</sequence>
<dbReference type="EC" id="5.1.3.2"/>
<dbReference type="EMBL" id="AE006914">
    <property type="protein sequence ID" value="AAL02995.1"/>
    <property type="molecule type" value="Genomic_DNA"/>
</dbReference>
<dbReference type="PIR" id="A97757">
    <property type="entry name" value="A97757"/>
</dbReference>
<dbReference type="RefSeq" id="WP_010977101.1">
    <property type="nucleotide sequence ID" value="NC_003103.1"/>
</dbReference>
<dbReference type="SMR" id="Q92IG3"/>
<dbReference type="GeneID" id="927592"/>
<dbReference type="KEGG" id="rco:RC0457"/>
<dbReference type="PATRIC" id="fig|272944.4.peg.523"/>
<dbReference type="HOGENOM" id="CLU_013560_4_1_5"/>
<dbReference type="Proteomes" id="UP000000816">
    <property type="component" value="Chromosome"/>
</dbReference>
<dbReference type="GO" id="GO:0003978">
    <property type="term" value="F:UDP-glucose 4-epimerase activity"/>
    <property type="evidence" value="ECO:0007669"/>
    <property type="project" value="UniProtKB-EC"/>
</dbReference>
<dbReference type="GO" id="GO:0009103">
    <property type="term" value="P:lipopolysaccharide biosynthetic process"/>
    <property type="evidence" value="ECO:0007669"/>
    <property type="project" value="UniProtKB-KW"/>
</dbReference>
<dbReference type="CDD" id="cd05237">
    <property type="entry name" value="UDP_invert_4-6DH_SDR_e"/>
    <property type="match status" value="1"/>
</dbReference>
<dbReference type="Gene3D" id="3.40.50.720">
    <property type="entry name" value="NAD(P)-binding Rossmann-like Domain"/>
    <property type="match status" value="1"/>
</dbReference>
<dbReference type="InterPro" id="IPR013692">
    <property type="entry name" value="CapD_C"/>
</dbReference>
<dbReference type="InterPro" id="IPR036291">
    <property type="entry name" value="NAD(P)-bd_dom_sf"/>
</dbReference>
<dbReference type="InterPro" id="IPR003869">
    <property type="entry name" value="Polysac_CapD-like"/>
</dbReference>
<dbReference type="InterPro" id="IPR051203">
    <property type="entry name" value="Polysaccharide_Synthase-Rel"/>
</dbReference>
<dbReference type="PANTHER" id="PTHR43318">
    <property type="entry name" value="UDP-N-ACETYLGLUCOSAMINE 4,6-DEHYDRATASE"/>
    <property type="match status" value="1"/>
</dbReference>
<dbReference type="PANTHER" id="PTHR43318:SF2">
    <property type="entry name" value="UDP-N-ACETYLGLUCOSAMINE 4,6-DEHYDRATASE (INVERTING)"/>
    <property type="match status" value="1"/>
</dbReference>
<dbReference type="Pfam" id="PF08485">
    <property type="entry name" value="Polysacc_syn_2C"/>
    <property type="match status" value="1"/>
</dbReference>
<dbReference type="Pfam" id="PF02719">
    <property type="entry name" value="Polysacc_synt_2"/>
    <property type="match status" value="1"/>
</dbReference>
<dbReference type="SUPFAM" id="SSF51735">
    <property type="entry name" value="NAD(P)-binding Rossmann-fold domains"/>
    <property type="match status" value="1"/>
</dbReference>
<evidence type="ECO:0000250" key="1"/>
<evidence type="ECO:0000305" key="2"/>
<keyword id="KW-0413">Isomerase</keyword>
<keyword id="KW-0448">Lipopolysaccharide biosynthesis</keyword>
<feature type="chain" id="PRO_0000314603" description="UDP-glucose 4-epimerase">
    <location>
        <begin position="1"/>
        <end position="341"/>
    </location>
</feature>
<organism>
    <name type="scientific">Rickettsia conorii (strain ATCC VR-613 / Malish 7)</name>
    <dbReference type="NCBI Taxonomy" id="272944"/>
    <lineage>
        <taxon>Bacteria</taxon>
        <taxon>Pseudomonadati</taxon>
        <taxon>Pseudomonadota</taxon>
        <taxon>Alphaproteobacteria</taxon>
        <taxon>Rickettsiales</taxon>
        <taxon>Rickettsiaceae</taxon>
        <taxon>Rickettsieae</taxon>
        <taxon>Rickettsia</taxon>
        <taxon>spotted fever group</taxon>
    </lineage>
</organism>
<gene>
    <name type="primary">capD</name>
    <name type="ordered locus">RC0457</name>
</gene>